<proteinExistence type="inferred from homology"/>
<accession>O26258</accession>
<gene>
    <name type="ordered locus">MTH_155</name>
</gene>
<reference key="1">
    <citation type="journal article" date="1997" name="J. Bacteriol.">
        <title>Complete genome sequence of Methanobacterium thermoautotrophicum deltaH: functional analysis and comparative genomics.</title>
        <authorList>
            <person name="Smith D.R."/>
            <person name="Doucette-Stamm L.A."/>
            <person name="Deloughery C."/>
            <person name="Lee H.-M."/>
            <person name="Dubois J."/>
            <person name="Aldredge T."/>
            <person name="Bashirzadeh R."/>
            <person name="Blakely D."/>
            <person name="Cook R."/>
            <person name="Gilbert K."/>
            <person name="Harrison D."/>
            <person name="Hoang L."/>
            <person name="Keagle P."/>
            <person name="Lumm W."/>
            <person name="Pothier B."/>
            <person name="Qiu D."/>
            <person name="Spadafora R."/>
            <person name="Vicare R."/>
            <person name="Wang Y."/>
            <person name="Wierzbowski J."/>
            <person name="Gibson R."/>
            <person name="Jiwani N."/>
            <person name="Caruso A."/>
            <person name="Bush D."/>
            <person name="Safer H."/>
            <person name="Patwell D."/>
            <person name="Prabhakar S."/>
            <person name="McDougall S."/>
            <person name="Shimer G."/>
            <person name="Goyal A."/>
            <person name="Pietrovski S."/>
            <person name="Church G.M."/>
            <person name="Daniels C.J."/>
            <person name="Mao J.-I."/>
            <person name="Rice P."/>
            <person name="Noelling J."/>
            <person name="Reeve J.N."/>
        </authorList>
    </citation>
    <scope>NUCLEOTIDE SEQUENCE [LARGE SCALE GENOMIC DNA]</scope>
    <source>
        <strain>ATCC 29096 / DSM 1053 / JCM 10044 / NBRC 100330 / Delta H</strain>
    </source>
</reference>
<feature type="chain" id="PRO_0000135060" description="Probable rubredoxin">
    <location>
        <begin position="1"/>
        <end position="63"/>
    </location>
</feature>
<feature type="domain" description="Rubredoxin-like" evidence="2">
    <location>
        <begin position="11"/>
        <end position="62"/>
    </location>
</feature>
<feature type="binding site" evidence="2">
    <location>
        <position position="16"/>
    </location>
    <ligand>
        <name>Fe cation</name>
        <dbReference type="ChEBI" id="CHEBI:24875"/>
    </ligand>
</feature>
<feature type="binding site" evidence="2">
    <location>
        <position position="19"/>
    </location>
    <ligand>
        <name>Fe cation</name>
        <dbReference type="ChEBI" id="CHEBI:24875"/>
    </ligand>
</feature>
<feature type="binding site" evidence="2">
    <location>
        <position position="49"/>
    </location>
    <ligand>
        <name>Fe cation</name>
        <dbReference type="ChEBI" id="CHEBI:24875"/>
    </ligand>
</feature>
<feature type="binding site" evidence="2">
    <location>
        <position position="52"/>
    </location>
    <ligand>
        <name>Fe cation</name>
        <dbReference type="ChEBI" id="CHEBI:24875"/>
    </ligand>
</feature>
<dbReference type="EMBL" id="AE000666">
    <property type="protein sequence ID" value="AAB84661.1"/>
    <property type="molecule type" value="Genomic_DNA"/>
</dbReference>
<dbReference type="PIR" id="G69073">
    <property type="entry name" value="G69073"/>
</dbReference>
<dbReference type="SMR" id="O26258"/>
<dbReference type="FunCoup" id="O26258">
    <property type="interactions" value="2"/>
</dbReference>
<dbReference type="STRING" id="187420.MTH_155"/>
<dbReference type="PaxDb" id="187420-MTH_155"/>
<dbReference type="EnsemblBacteria" id="AAB84661">
    <property type="protein sequence ID" value="AAB84661"/>
    <property type="gene ID" value="MTH_155"/>
</dbReference>
<dbReference type="KEGG" id="mth:MTH_155"/>
<dbReference type="PATRIC" id="fig|187420.15.peg.127"/>
<dbReference type="HOGENOM" id="CLU_128747_3_3_2"/>
<dbReference type="InParanoid" id="O26258"/>
<dbReference type="Proteomes" id="UP000005223">
    <property type="component" value="Chromosome"/>
</dbReference>
<dbReference type="GO" id="GO:0009055">
    <property type="term" value="F:electron transfer activity"/>
    <property type="evidence" value="ECO:0007669"/>
    <property type="project" value="InterPro"/>
</dbReference>
<dbReference type="GO" id="GO:0005506">
    <property type="term" value="F:iron ion binding"/>
    <property type="evidence" value="ECO:0007669"/>
    <property type="project" value="InterPro"/>
</dbReference>
<dbReference type="GO" id="GO:0043448">
    <property type="term" value="P:alkane catabolic process"/>
    <property type="evidence" value="ECO:0007669"/>
    <property type="project" value="TreeGrafter"/>
</dbReference>
<dbReference type="CDD" id="cd00730">
    <property type="entry name" value="rubredoxin"/>
    <property type="match status" value="1"/>
</dbReference>
<dbReference type="FunFam" id="2.20.28.10:FF:000001">
    <property type="entry name" value="Rubredoxin"/>
    <property type="match status" value="1"/>
</dbReference>
<dbReference type="Gene3D" id="2.20.28.10">
    <property type="match status" value="1"/>
</dbReference>
<dbReference type="InterPro" id="IPR024922">
    <property type="entry name" value="Rubredoxin"/>
</dbReference>
<dbReference type="InterPro" id="IPR024934">
    <property type="entry name" value="Rubredoxin-like_dom"/>
</dbReference>
<dbReference type="InterPro" id="IPR024935">
    <property type="entry name" value="Rubredoxin_dom"/>
</dbReference>
<dbReference type="InterPro" id="IPR050526">
    <property type="entry name" value="Rubredoxin_ET"/>
</dbReference>
<dbReference type="InterPro" id="IPR018527">
    <property type="entry name" value="Rubredoxin_Fe_BS"/>
</dbReference>
<dbReference type="PANTHER" id="PTHR47627">
    <property type="entry name" value="RUBREDOXIN"/>
    <property type="match status" value="1"/>
</dbReference>
<dbReference type="PANTHER" id="PTHR47627:SF1">
    <property type="entry name" value="RUBREDOXIN-1-RELATED"/>
    <property type="match status" value="1"/>
</dbReference>
<dbReference type="Pfam" id="PF00301">
    <property type="entry name" value="Rubredoxin"/>
    <property type="match status" value="1"/>
</dbReference>
<dbReference type="PIRSF" id="PIRSF000071">
    <property type="entry name" value="Rubredoxin"/>
    <property type="match status" value="1"/>
</dbReference>
<dbReference type="PRINTS" id="PR00163">
    <property type="entry name" value="RUBREDOXIN"/>
</dbReference>
<dbReference type="SUPFAM" id="SSF57802">
    <property type="entry name" value="Rubredoxin-like"/>
    <property type="match status" value="1"/>
</dbReference>
<dbReference type="PROSITE" id="PS00202">
    <property type="entry name" value="RUBREDOXIN"/>
    <property type="match status" value="1"/>
</dbReference>
<dbReference type="PROSITE" id="PS50903">
    <property type="entry name" value="RUBREDOXIN_LIKE"/>
    <property type="match status" value="1"/>
</dbReference>
<sequence length="63" mass="7156">MAAIKSEVSAMKRYKCRVCGYIYDPEKGEPRTDTPPGTPFEDLPETWRCPSCGAKKKMFKPLD</sequence>
<comment type="function">
    <text evidence="1">Rubredoxin is a small nonheme, iron protein lacking acid-labile sulfide. Its single Fe, chelated to 4 Cys, functions as an electron acceptor and may also stabilize the conformation of the molecule (By similarity).</text>
</comment>
<comment type="cofactor">
    <cofactor evidence="1">
        <name>Fe(3+)</name>
        <dbReference type="ChEBI" id="CHEBI:29034"/>
    </cofactor>
    <text evidence="1">Binds 1 Fe(3+) ion per subunit.</text>
</comment>
<comment type="similarity">
    <text evidence="3">Belongs to the rubredoxin family.</text>
</comment>
<name>RUBR_METTH</name>
<protein>
    <recommendedName>
        <fullName>Probable rubredoxin</fullName>
        <shortName>RD</shortName>
    </recommendedName>
</protein>
<organism>
    <name type="scientific">Methanothermobacter thermautotrophicus (strain ATCC 29096 / DSM 1053 / JCM 10044 / NBRC 100330 / Delta H)</name>
    <name type="common">Methanobacterium thermoautotrophicum</name>
    <dbReference type="NCBI Taxonomy" id="187420"/>
    <lineage>
        <taxon>Archaea</taxon>
        <taxon>Methanobacteriati</taxon>
        <taxon>Methanobacteriota</taxon>
        <taxon>Methanomada group</taxon>
        <taxon>Methanobacteria</taxon>
        <taxon>Methanobacteriales</taxon>
        <taxon>Methanobacteriaceae</taxon>
        <taxon>Methanothermobacter</taxon>
    </lineage>
</organism>
<evidence type="ECO:0000250" key="1"/>
<evidence type="ECO:0000255" key="2">
    <source>
        <dbReference type="PROSITE-ProRule" id="PRU00241"/>
    </source>
</evidence>
<evidence type="ECO:0000305" key="3"/>
<keyword id="KW-0249">Electron transport</keyword>
<keyword id="KW-0408">Iron</keyword>
<keyword id="KW-0479">Metal-binding</keyword>
<keyword id="KW-1185">Reference proteome</keyword>
<keyword id="KW-0813">Transport</keyword>